<gene>
    <name evidence="1" type="primary">ldh</name>
    <name type="ordered locus">MYPU_7590</name>
</gene>
<accession>Q98PG4</accession>
<proteinExistence type="inferred from homology"/>
<keyword id="KW-0021">Allosteric enzyme</keyword>
<keyword id="KW-0963">Cytoplasm</keyword>
<keyword id="KW-0520">NAD</keyword>
<keyword id="KW-0560">Oxidoreductase</keyword>
<keyword id="KW-0597">Phosphoprotein</keyword>
<keyword id="KW-1185">Reference proteome</keyword>
<name>LDH_MYCPU</name>
<feature type="chain" id="PRO_0000168375" description="L-lactate dehydrogenase">
    <location>
        <begin position="1"/>
        <end position="315"/>
    </location>
</feature>
<feature type="active site" description="Proton acceptor" evidence="1">
    <location>
        <position position="175"/>
    </location>
</feature>
<feature type="binding site" evidence="1">
    <location>
        <position position="12"/>
    </location>
    <ligand>
        <name>NAD(+)</name>
        <dbReference type="ChEBI" id="CHEBI:57540"/>
    </ligand>
</feature>
<feature type="binding site" evidence="1">
    <location>
        <position position="33"/>
    </location>
    <ligand>
        <name>NAD(+)</name>
        <dbReference type="ChEBI" id="CHEBI:57540"/>
    </ligand>
</feature>
<feature type="binding site" evidence="1">
    <location>
        <position position="65"/>
    </location>
    <ligand>
        <name>NAD(+)</name>
        <dbReference type="ChEBI" id="CHEBI:57540"/>
    </ligand>
</feature>
<feature type="binding site" evidence="1">
    <location>
        <position position="82"/>
    </location>
    <ligand>
        <name>substrate</name>
    </ligand>
</feature>
<feature type="binding site" evidence="1">
    <location>
        <position position="88"/>
    </location>
    <ligand>
        <name>substrate</name>
    </ligand>
</feature>
<feature type="binding site" evidence="1">
    <location>
        <begin position="118"/>
        <end position="120"/>
    </location>
    <ligand>
        <name>NAD(+)</name>
        <dbReference type="ChEBI" id="CHEBI:57540"/>
    </ligand>
</feature>
<feature type="binding site" evidence="1">
    <location>
        <begin position="120"/>
        <end position="123"/>
    </location>
    <ligand>
        <name>substrate</name>
    </ligand>
</feature>
<feature type="binding site" evidence="1">
    <location>
        <position position="143"/>
    </location>
    <ligand>
        <name>NAD(+)</name>
        <dbReference type="ChEBI" id="CHEBI:57540"/>
    </ligand>
</feature>
<feature type="binding site" evidence="1">
    <location>
        <begin position="148"/>
        <end position="151"/>
    </location>
    <ligand>
        <name>substrate</name>
    </ligand>
</feature>
<feature type="binding site" evidence="1">
    <location>
        <position position="153"/>
    </location>
    <ligand>
        <name>beta-D-fructose 1,6-bisphosphate</name>
        <dbReference type="ChEBI" id="CHEBI:32966"/>
        <note>allosteric activator</note>
    </ligand>
</feature>
<feature type="binding site" evidence="1">
    <location>
        <position position="168"/>
    </location>
    <ligand>
        <name>beta-D-fructose 1,6-bisphosphate</name>
        <dbReference type="ChEBI" id="CHEBI:32966"/>
        <note>allosteric activator</note>
    </ligand>
</feature>
<feature type="binding site" evidence="1">
    <location>
        <position position="228"/>
    </location>
    <ligand>
        <name>substrate</name>
    </ligand>
</feature>
<feature type="modified residue" description="Phosphotyrosine" evidence="1">
    <location>
        <position position="219"/>
    </location>
</feature>
<organism>
    <name type="scientific">Mycoplasmopsis pulmonis (strain UAB CTIP)</name>
    <name type="common">Mycoplasma pulmonis</name>
    <dbReference type="NCBI Taxonomy" id="272635"/>
    <lineage>
        <taxon>Bacteria</taxon>
        <taxon>Bacillati</taxon>
        <taxon>Mycoplasmatota</taxon>
        <taxon>Mycoplasmoidales</taxon>
        <taxon>Metamycoplasmataceae</taxon>
        <taxon>Mycoplasmopsis</taxon>
    </lineage>
</organism>
<protein>
    <recommendedName>
        <fullName evidence="1">L-lactate dehydrogenase</fullName>
        <shortName evidence="1">L-LDH</shortName>
        <ecNumber evidence="1">1.1.1.27</ecNumber>
    </recommendedName>
</protein>
<sequence length="315" mass="34925">MKKVVLIGTGNVGVTVVYTMITKGIDAEYVLIDINTEFAKGHAMDMSDAIALNSTTGSKIRTGTYADAKGADLLIVAAGRPQKQGETRLEMIADNSKIMKDIALEIKKSGFNGFTIVISNPVDILATVFQKVTNFPKEKVMSSGTFLDTSRFRKFLSEKTGVPTNSVHGFVIGEHGDKSVVVFSRMQIGFSRLDDFLKSKALTEDDLKWISEKTYKEAYEIINRKRSTYFGIGASVAEMAESVLYNQRRIFPIGIYLDESKPGGGIYISRPAILGENGWEEVKNYDLSPAEQKAFDESAINLKKHWDDVQKEISF</sequence>
<comment type="function">
    <text evidence="1">Catalyzes the conversion of lactate to pyruvate.</text>
</comment>
<comment type="catalytic activity">
    <reaction evidence="1">
        <text>(S)-lactate + NAD(+) = pyruvate + NADH + H(+)</text>
        <dbReference type="Rhea" id="RHEA:23444"/>
        <dbReference type="ChEBI" id="CHEBI:15361"/>
        <dbReference type="ChEBI" id="CHEBI:15378"/>
        <dbReference type="ChEBI" id="CHEBI:16651"/>
        <dbReference type="ChEBI" id="CHEBI:57540"/>
        <dbReference type="ChEBI" id="CHEBI:57945"/>
        <dbReference type="EC" id="1.1.1.27"/>
    </reaction>
</comment>
<comment type="activity regulation">
    <text evidence="1">Allosterically activated by fructose 1,6-bisphosphate (FBP).</text>
</comment>
<comment type="pathway">
    <text evidence="1">Fermentation; pyruvate fermentation to lactate; (S)-lactate from pyruvate: step 1/1.</text>
</comment>
<comment type="subunit">
    <text evidence="1">Homotetramer.</text>
</comment>
<comment type="subcellular location">
    <subcellularLocation>
        <location evidence="1">Cytoplasm</location>
    </subcellularLocation>
</comment>
<comment type="similarity">
    <text evidence="1 2">Belongs to the LDH/MDH superfamily. LDH family.</text>
</comment>
<reference key="1">
    <citation type="journal article" date="2001" name="Nucleic Acids Res.">
        <title>The complete genome sequence of the murine respiratory pathogen Mycoplasma pulmonis.</title>
        <authorList>
            <person name="Chambaud I."/>
            <person name="Heilig R."/>
            <person name="Ferris S."/>
            <person name="Barbe V."/>
            <person name="Samson D."/>
            <person name="Galisson F."/>
            <person name="Moszer I."/>
            <person name="Dybvig K."/>
            <person name="Wroblewski H."/>
            <person name="Viari A."/>
            <person name="Rocha E.P.C."/>
            <person name="Blanchard A."/>
        </authorList>
    </citation>
    <scope>NUCLEOTIDE SEQUENCE [LARGE SCALE GENOMIC DNA]</scope>
    <source>
        <strain>UAB CTIP</strain>
    </source>
</reference>
<evidence type="ECO:0000255" key="1">
    <source>
        <dbReference type="HAMAP-Rule" id="MF_00488"/>
    </source>
</evidence>
<evidence type="ECO:0000305" key="2"/>
<dbReference type="EC" id="1.1.1.27" evidence="1"/>
<dbReference type="EMBL" id="AL445565">
    <property type="protein sequence ID" value="CAC13932.1"/>
    <property type="molecule type" value="Genomic_DNA"/>
</dbReference>
<dbReference type="PIR" id="G90606">
    <property type="entry name" value="G90606"/>
</dbReference>
<dbReference type="RefSeq" id="WP_010925559.1">
    <property type="nucleotide sequence ID" value="NC_002771.1"/>
</dbReference>
<dbReference type="SMR" id="Q98PG4"/>
<dbReference type="STRING" id="272635.gene:17577370"/>
<dbReference type="KEGG" id="mpu:MYPU_7590"/>
<dbReference type="eggNOG" id="COG0039">
    <property type="taxonomic scope" value="Bacteria"/>
</dbReference>
<dbReference type="HOGENOM" id="CLU_045401_1_2_14"/>
<dbReference type="BioCyc" id="MPUL272635:G1GT6-770-MONOMER"/>
<dbReference type="UniPathway" id="UPA00554">
    <property type="reaction ID" value="UER00611"/>
</dbReference>
<dbReference type="Proteomes" id="UP000000528">
    <property type="component" value="Chromosome"/>
</dbReference>
<dbReference type="GO" id="GO:0005737">
    <property type="term" value="C:cytoplasm"/>
    <property type="evidence" value="ECO:0007669"/>
    <property type="project" value="UniProtKB-SubCell"/>
</dbReference>
<dbReference type="GO" id="GO:0004459">
    <property type="term" value="F:L-lactate dehydrogenase activity"/>
    <property type="evidence" value="ECO:0007669"/>
    <property type="project" value="UniProtKB-UniRule"/>
</dbReference>
<dbReference type="GO" id="GO:0006096">
    <property type="term" value="P:glycolytic process"/>
    <property type="evidence" value="ECO:0007669"/>
    <property type="project" value="UniProtKB-UniRule"/>
</dbReference>
<dbReference type="GO" id="GO:0006089">
    <property type="term" value="P:lactate metabolic process"/>
    <property type="evidence" value="ECO:0007669"/>
    <property type="project" value="TreeGrafter"/>
</dbReference>
<dbReference type="CDD" id="cd05291">
    <property type="entry name" value="HicDH_like"/>
    <property type="match status" value="1"/>
</dbReference>
<dbReference type="Gene3D" id="3.90.110.10">
    <property type="entry name" value="Lactate dehydrogenase/glycoside hydrolase, family 4, C-terminal"/>
    <property type="match status" value="1"/>
</dbReference>
<dbReference type="Gene3D" id="3.40.50.720">
    <property type="entry name" value="NAD(P)-binding Rossmann-like Domain"/>
    <property type="match status" value="1"/>
</dbReference>
<dbReference type="HAMAP" id="MF_00488">
    <property type="entry name" value="Lactate_dehydrog"/>
    <property type="match status" value="1"/>
</dbReference>
<dbReference type="InterPro" id="IPR001557">
    <property type="entry name" value="L-lactate/malate_DH"/>
</dbReference>
<dbReference type="InterPro" id="IPR011304">
    <property type="entry name" value="L-lactate_DH"/>
</dbReference>
<dbReference type="InterPro" id="IPR022383">
    <property type="entry name" value="Lactate/malate_DH_C"/>
</dbReference>
<dbReference type="InterPro" id="IPR001236">
    <property type="entry name" value="Lactate/malate_DH_N"/>
</dbReference>
<dbReference type="InterPro" id="IPR015955">
    <property type="entry name" value="Lactate_DH/Glyco_Ohase_4_C"/>
</dbReference>
<dbReference type="InterPro" id="IPR036291">
    <property type="entry name" value="NAD(P)-bd_dom_sf"/>
</dbReference>
<dbReference type="NCBIfam" id="TIGR01771">
    <property type="entry name" value="L-LDH-NAD"/>
    <property type="match status" value="1"/>
</dbReference>
<dbReference type="PANTHER" id="PTHR43128">
    <property type="entry name" value="L-2-HYDROXYCARBOXYLATE DEHYDROGENASE (NAD(P)(+))"/>
    <property type="match status" value="1"/>
</dbReference>
<dbReference type="PANTHER" id="PTHR43128:SF16">
    <property type="entry name" value="L-LACTATE DEHYDROGENASE"/>
    <property type="match status" value="1"/>
</dbReference>
<dbReference type="Pfam" id="PF02866">
    <property type="entry name" value="Ldh_1_C"/>
    <property type="match status" value="1"/>
</dbReference>
<dbReference type="Pfam" id="PF00056">
    <property type="entry name" value="Ldh_1_N"/>
    <property type="match status" value="1"/>
</dbReference>
<dbReference type="PIRSF" id="PIRSF000102">
    <property type="entry name" value="Lac_mal_DH"/>
    <property type="match status" value="1"/>
</dbReference>
<dbReference type="PRINTS" id="PR00086">
    <property type="entry name" value="LLDHDRGNASE"/>
</dbReference>
<dbReference type="SUPFAM" id="SSF56327">
    <property type="entry name" value="LDH C-terminal domain-like"/>
    <property type="match status" value="1"/>
</dbReference>
<dbReference type="SUPFAM" id="SSF51735">
    <property type="entry name" value="NAD(P)-binding Rossmann-fold domains"/>
    <property type="match status" value="1"/>
</dbReference>